<protein>
    <recommendedName>
        <fullName>Cleavage and polyadenylation specificity factor subunit 4</fullName>
    </recommendedName>
</protein>
<sequence length="269" mass="30496">MQELIACVDHIRFDLELAVEQQLGAQPLPFPGMDKSGAAVCEFFLKSACGKGGMCPFRHISGEKTVVCKHWLRGLCKKGDQCEFLHEYDMTKMPECYFYSKFGECSNKECPFLHIDPESKIKDCPWYDRGFCKHGPLCRHRHTRRVICVNYLVGFCIEGPNCKFMHPRFELPMGTTEQPPLPQQTQTQQKQNNNQVLQRSSSLIQLTSQNSPVSQQRSPQTIGVMQSQSGNQGNRGPRPLDQVTCYKCGEKGHYANRCTKGHLAFLSGQ</sequence>
<comment type="function">
    <text evidence="1">Component of the cleavage and polyadenylation specificity factor (CPSF) complex that play a key role in pre-mRNA 3'-end formation, recognizing the AAUAAA signal sequence and interacting with poly(A) polymerase and other factors to bring about cleavage and poly(A) addition. Cpsf4 binds RNA polymers with a preference for poly(U) (By similarity).</text>
</comment>
<comment type="subunit">
    <text evidence="1">Component of the cleavage and polyadenylation specificity factor (CPSF) complex, composed of cpsf1, cpsf2, cpsf3, cpsf4 and fip1l1.</text>
</comment>
<comment type="subcellular location">
    <subcellularLocation>
        <location evidence="1">Nucleus</location>
    </subcellularLocation>
</comment>
<comment type="similarity">
    <text evidence="5">Belongs to the CPSF4/YTH1 family.</text>
</comment>
<keyword id="KW-0479">Metal-binding</keyword>
<keyword id="KW-0507">mRNA processing</keyword>
<keyword id="KW-0539">Nucleus</keyword>
<keyword id="KW-1185">Reference proteome</keyword>
<keyword id="KW-0677">Repeat</keyword>
<keyword id="KW-0694">RNA-binding</keyword>
<keyword id="KW-0862">Zinc</keyword>
<keyword id="KW-0863">Zinc-finger</keyword>
<organism>
    <name type="scientific">Xenopus tropicalis</name>
    <name type="common">Western clawed frog</name>
    <name type="synonym">Silurana tropicalis</name>
    <dbReference type="NCBI Taxonomy" id="8364"/>
    <lineage>
        <taxon>Eukaryota</taxon>
        <taxon>Metazoa</taxon>
        <taxon>Chordata</taxon>
        <taxon>Craniata</taxon>
        <taxon>Vertebrata</taxon>
        <taxon>Euteleostomi</taxon>
        <taxon>Amphibia</taxon>
        <taxon>Batrachia</taxon>
        <taxon>Anura</taxon>
        <taxon>Pipoidea</taxon>
        <taxon>Pipidae</taxon>
        <taxon>Xenopodinae</taxon>
        <taxon>Xenopus</taxon>
        <taxon>Silurana</taxon>
    </lineage>
</organism>
<proteinExistence type="evidence at transcript level"/>
<gene>
    <name type="primary">cpsf4</name>
</gene>
<dbReference type="EMBL" id="BC080440">
    <property type="protein sequence ID" value="AAH80440.1"/>
    <property type="molecule type" value="mRNA"/>
</dbReference>
<dbReference type="RefSeq" id="NP_001007933.1">
    <property type="nucleotide sequence ID" value="NM_001007932.1"/>
</dbReference>
<dbReference type="SMR" id="Q66KE3"/>
<dbReference type="FunCoup" id="Q66KE3">
    <property type="interactions" value="2933"/>
</dbReference>
<dbReference type="STRING" id="8364.ENSXETP00000016341"/>
<dbReference type="PaxDb" id="8364-ENSXETP00000021783"/>
<dbReference type="DNASU" id="493312"/>
<dbReference type="GeneID" id="493312"/>
<dbReference type="KEGG" id="xtr:493312"/>
<dbReference type="AGR" id="Xenbase:XB-GENE-948302"/>
<dbReference type="CTD" id="10898"/>
<dbReference type="Xenbase" id="XB-GENE-948302">
    <property type="gene designation" value="cpsf4"/>
</dbReference>
<dbReference type="eggNOG" id="KOG1040">
    <property type="taxonomic scope" value="Eukaryota"/>
</dbReference>
<dbReference type="HOGENOM" id="CLU_024513_0_1_1"/>
<dbReference type="InParanoid" id="Q66KE3"/>
<dbReference type="OrthoDB" id="1914176at2759"/>
<dbReference type="Proteomes" id="UP000008143">
    <property type="component" value="Chromosome 9"/>
</dbReference>
<dbReference type="Bgee" id="ENSXETG00000009892">
    <property type="expression patterns" value="Expressed in 4-cell stage embryo and 12 other cell types or tissues"/>
</dbReference>
<dbReference type="ExpressionAtlas" id="Q66KE3">
    <property type="expression patterns" value="baseline"/>
</dbReference>
<dbReference type="GO" id="GO:0005847">
    <property type="term" value="C:mRNA cleavage and polyadenylation specificity factor complex"/>
    <property type="evidence" value="ECO:0000250"/>
    <property type="project" value="UniProtKB"/>
</dbReference>
<dbReference type="GO" id="GO:0003723">
    <property type="term" value="F:RNA binding"/>
    <property type="evidence" value="ECO:0007669"/>
    <property type="project" value="UniProtKB-KW"/>
</dbReference>
<dbReference type="GO" id="GO:0008270">
    <property type="term" value="F:zinc ion binding"/>
    <property type="evidence" value="ECO:0007669"/>
    <property type="project" value="UniProtKB-KW"/>
</dbReference>
<dbReference type="GO" id="GO:0010172">
    <property type="term" value="P:embryonic body morphogenesis"/>
    <property type="evidence" value="ECO:0000315"/>
    <property type="project" value="Xenbase"/>
</dbReference>
<dbReference type="GO" id="GO:0006397">
    <property type="term" value="P:mRNA processing"/>
    <property type="evidence" value="ECO:0007669"/>
    <property type="project" value="UniProtKB-KW"/>
</dbReference>
<dbReference type="FunFam" id="4.10.60.10:FF:000008">
    <property type="entry name" value="Cleavage and polyadenylation specificity factor subunit 4"/>
    <property type="match status" value="1"/>
</dbReference>
<dbReference type="FunFam" id="4.10.1000.10:FF:000005">
    <property type="entry name" value="cleavage and polyadenylation specificity factor subunit 4"/>
    <property type="match status" value="1"/>
</dbReference>
<dbReference type="FunFam" id="4.10.1000.10:FF:000019">
    <property type="entry name" value="cleavage and polyadenylation specificity factor subunit 4 isoform X2"/>
    <property type="match status" value="1"/>
</dbReference>
<dbReference type="Gene3D" id="4.10.1000.10">
    <property type="entry name" value="Zinc finger, CCCH-type"/>
    <property type="match status" value="2"/>
</dbReference>
<dbReference type="Gene3D" id="4.10.60.10">
    <property type="entry name" value="Zinc finger, CCHC-type"/>
    <property type="match status" value="1"/>
</dbReference>
<dbReference type="InterPro" id="IPR045348">
    <property type="entry name" value="CPSF4/Yth1"/>
</dbReference>
<dbReference type="InterPro" id="IPR041686">
    <property type="entry name" value="Znf-CCCH_3"/>
</dbReference>
<dbReference type="InterPro" id="IPR000571">
    <property type="entry name" value="Znf_CCCH"/>
</dbReference>
<dbReference type="InterPro" id="IPR036855">
    <property type="entry name" value="Znf_CCCH_sf"/>
</dbReference>
<dbReference type="InterPro" id="IPR001878">
    <property type="entry name" value="Znf_CCHC"/>
</dbReference>
<dbReference type="InterPro" id="IPR036875">
    <property type="entry name" value="Znf_CCHC_sf"/>
</dbReference>
<dbReference type="PANTHER" id="PTHR23102:SF26">
    <property type="entry name" value="CLEAVAGE AND POLYADENYLATION SPECIFICITY FACTOR SUBUNIT 4"/>
    <property type="match status" value="1"/>
</dbReference>
<dbReference type="PANTHER" id="PTHR23102">
    <property type="entry name" value="CLEAVAGE AND POLYADENYLATION SPECIFICITY FACTOR SUBUNIT 4-RELATED"/>
    <property type="match status" value="1"/>
</dbReference>
<dbReference type="Pfam" id="PF14608">
    <property type="entry name" value="zf-CCCH_2"/>
    <property type="match status" value="1"/>
</dbReference>
<dbReference type="Pfam" id="PF15663">
    <property type="entry name" value="zf-CCCH_3"/>
    <property type="match status" value="1"/>
</dbReference>
<dbReference type="Pfam" id="PF00098">
    <property type="entry name" value="zf-CCHC"/>
    <property type="match status" value="1"/>
</dbReference>
<dbReference type="SMART" id="SM00343">
    <property type="entry name" value="ZnF_C2HC"/>
    <property type="match status" value="1"/>
</dbReference>
<dbReference type="SMART" id="SM00356">
    <property type="entry name" value="ZnF_C3H1"/>
    <property type="match status" value="5"/>
</dbReference>
<dbReference type="SUPFAM" id="SSF90229">
    <property type="entry name" value="CCCH zinc finger"/>
    <property type="match status" value="2"/>
</dbReference>
<dbReference type="SUPFAM" id="SSF57756">
    <property type="entry name" value="Retrovirus zinc finger-like domains"/>
    <property type="match status" value="1"/>
</dbReference>
<dbReference type="PROSITE" id="PS50103">
    <property type="entry name" value="ZF_C3H1"/>
    <property type="match status" value="5"/>
</dbReference>
<dbReference type="PROSITE" id="PS50158">
    <property type="entry name" value="ZF_CCHC"/>
    <property type="match status" value="1"/>
</dbReference>
<accession>Q66KE3</accession>
<reference key="1">
    <citation type="submission" date="2004-08" db="EMBL/GenBank/DDBJ databases">
        <authorList>
            <consortium name="NIH - Xenopus Gene Collection (XGC) project"/>
        </authorList>
    </citation>
    <scope>NUCLEOTIDE SEQUENCE [LARGE SCALE MRNA]</scope>
</reference>
<feature type="chain" id="PRO_0000317365" description="Cleavage and polyadenylation specificity factor subunit 4">
    <location>
        <begin position="1"/>
        <end position="269"/>
    </location>
</feature>
<feature type="zinc finger region" description="C3H1-type 1" evidence="3">
    <location>
        <begin position="35"/>
        <end position="61"/>
    </location>
</feature>
<feature type="zinc finger region" description="C3H1-type 2" evidence="3">
    <location>
        <begin position="62"/>
        <end position="89"/>
    </location>
</feature>
<feature type="zinc finger region" description="C3H1-type 3" evidence="3">
    <location>
        <begin position="90"/>
        <end position="117"/>
    </location>
</feature>
<feature type="zinc finger region" description="C3H1-type 4" evidence="3">
    <location>
        <begin position="118"/>
        <end position="145"/>
    </location>
</feature>
<feature type="zinc finger region" description="C3H1-type 5" evidence="3">
    <location>
        <begin position="146"/>
        <end position="169"/>
    </location>
</feature>
<feature type="zinc finger region" description="CCHC-type" evidence="2">
    <location>
        <begin position="243"/>
        <end position="260"/>
    </location>
</feature>
<feature type="region of interest" description="Disordered" evidence="4">
    <location>
        <begin position="173"/>
        <end position="239"/>
    </location>
</feature>
<feature type="compositionally biased region" description="Low complexity" evidence="4">
    <location>
        <begin position="175"/>
        <end position="195"/>
    </location>
</feature>
<feature type="compositionally biased region" description="Polar residues" evidence="4">
    <location>
        <begin position="196"/>
        <end position="234"/>
    </location>
</feature>
<name>CPSF4_XENTR</name>
<evidence type="ECO:0000250" key="1"/>
<evidence type="ECO:0000255" key="2">
    <source>
        <dbReference type="PROSITE-ProRule" id="PRU00047"/>
    </source>
</evidence>
<evidence type="ECO:0000255" key="3">
    <source>
        <dbReference type="PROSITE-ProRule" id="PRU00723"/>
    </source>
</evidence>
<evidence type="ECO:0000256" key="4">
    <source>
        <dbReference type="SAM" id="MobiDB-lite"/>
    </source>
</evidence>
<evidence type="ECO:0000305" key="5"/>